<organism>
    <name type="scientific">Human immunodeficiency virus type 1 group M subtype B (isolate SF162)</name>
    <name type="common">HIV-1</name>
    <dbReference type="NCBI Taxonomy" id="11691"/>
    <lineage>
        <taxon>Viruses</taxon>
        <taxon>Riboviria</taxon>
        <taxon>Pararnavirae</taxon>
        <taxon>Artverviricota</taxon>
        <taxon>Revtraviricetes</taxon>
        <taxon>Ortervirales</taxon>
        <taxon>Retroviridae</taxon>
        <taxon>Orthoretrovirinae</taxon>
        <taxon>Lentivirus</taxon>
        <taxon>Human immunodeficiency virus type 1</taxon>
    </lineage>
</organism>
<evidence type="ECO:0000255" key="1">
    <source>
        <dbReference type="HAMAP-Rule" id="MF_04082"/>
    </source>
</evidence>
<evidence type="ECO:0000256" key="2">
    <source>
        <dbReference type="SAM" id="MobiDB-lite"/>
    </source>
</evidence>
<evidence type="ECO:0000269" key="3">
    <source>
    </source>
</evidence>
<evidence type="ECO:0007744" key="4">
    <source>
        <dbReference type="PDB" id="1VPU"/>
    </source>
</evidence>
<evidence type="ECO:0007744" key="5">
    <source>
        <dbReference type="PDB" id="2K7Y"/>
    </source>
</evidence>
<evidence type="ECO:0007744" key="6">
    <source>
        <dbReference type="PDB" id="4P6Z"/>
    </source>
</evidence>
<evidence type="ECO:0007829" key="7">
    <source>
        <dbReference type="PDB" id="1VPU"/>
    </source>
</evidence>
<evidence type="ECO:0007829" key="8">
    <source>
        <dbReference type="PDB" id="4P6Z"/>
    </source>
</evidence>
<protein>
    <recommendedName>
        <fullName evidence="1">Protein Vpu</fullName>
    </recommendedName>
    <alternativeName>
        <fullName evidence="1">U ORF protein</fullName>
    </alternativeName>
    <alternativeName>
        <fullName evidence="1">Viral protein U</fullName>
    </alternativeName>
</protein>
<gene>
    <name evidence="1" type="primary">vpu</name>
</gene>
<sequence>MQPLQILAIVALVVAAIIAIVVWTIVYIEYRKILRQRKIDRLIDRITERAEDSGNESEGDQEELSALVERGHLAPWDVDDL</sequence>
<name>VPU_HV1S1</name>
<proteinExistence type="evidence at protein level"/>
<comment type="function">
    <text evidence="1 3">Enhances virion budding by targeting host CD4 and Tetherin/BST2 to proteasome degradation. Degradation of CD4 prevents any unwanted premature interactions between viral Env and its host receptor CD4 in the endoplasmic reticulum. Degradation of antiretroviral protein Tetherin/BST2 is important for virion budding, as BST2 tethers new viral particles to the host cell membrane. Mechanistically, Vpu bridges either CD4 or BST2 to BTRC, a substrate recognition subunit of the Skp1/Cullin/F-box protein E3 ubiquitin ligase, induces their ubiquitination and subsequent proteasomal degradation. The alteration of the E3 ligase specificity by Vpu seems to promote the degradation of host IKBKB, leading to NF-kappa-B down-regulation and subsequent apoptosis. Acts as a viroporin that forms an oligomeric ion channel in membranes. Modulates the host DNA repair mechanisms to promote degradation of nuclear viral cDNA in cells that are already productively infected in order to suppress immune sensing and proviral hyper-integration (superinfection). Manipulates PML-NBs and modulates SUMOylation of host BLM protein thereby enhancing its DNA-end processing activity toward viral unintegrated linear DNA. Also inhibits RAD52-mediated homologous repair of viral cDNA, preventing the generation of dead-end circular forms of single copies of the long terminal repeat and permitting sustained nucleolytic attack.</text>
</comment>
<comment type="activity regulation">
    <text evidence="1">Ion channel activity is inhibited by hexamethylene amiloride in vitro.</text>
</comment>
<comment type="subunit">
    <text evidence="1 3">Homopentamer. Interacts with host CD4 and BRTC; these interactions induce proteasomal degradation of CD4. Interacts with host BST2; this interaction leads to the degradation of host BST2. Interacts with host FBXW11. Interacts with host AP1M1; this interaction plays a role in the mistrafficking and subsequent degradation of host BST2. Interacts with host RANBP2; this interaction allows Vpu to down-regulate host BLM sumoylation.</text>
</comment>
<comment type="subcellular location">
    <subcellularLocation>
        <location evidence="1">Host membrane</location>
        <topology evidence="1">Single-pass type I membrane protein</topology>
    </subcellularLocation>
</comment>
<comment type="domain">
    <text evidence="1">The N-terminus and transmembrane domains are required for self-oligomerization and proper virion budding, whereas the cytoplasmic domain is required for CD4 degradation. The cytoplasmic domain is composed of 2 amphipathic alpha helix that form a U-shape.</text>
</comment>
<comment type="PTM">
    <text evidence="1">Phosphorylated by host CK2. This phosphorylation is necessary for interaction with human BTRC and degradation of CD4.</text>
</comment>
<comment type="miscellaneous">
    <text evidence="1">HIV-1 lineages are divided in three main groups, M (for Major), O (for Outlier), and N (for New, or Non-M, Non-O). The vast majority of strains found worldwide belong to the group M. Group O seems to be endemic to and largely confined to Cameroon and neighboring countries in West Central Africa, where these viruses represent a small minority of HIV-1 strains. The group N is represented by a limited number of isolates from Cameroonian persons. The group M is further subdivided in 9 clades or subtypes (A to D, F to H, J and K).</text>
</comment>
<comment type="similarity">
    <text evidence="1">Belongs to the HIV-1 VPU protein family.</text>
</comment>
<feature type="chain" id="PRO_0000085421" description="Protein Vpu">
    <location>
        <begin position="1"/>
        <end position="81"/>
    </location>
</feature>
<feature type="topological domain" description="Extracellular" evidence="1">
    <location>
        <begin position="1"/>
        <end position="7"/>
    </location>
</feature>
<feature type="transmembrane region" description="Helical" evidence="1">
    <location>
        <begin position="8"/>
        <end position="28"/>
    </location>
</feature>
<feature type="topological domain" description="Cytoplasmic" evidence="1">
    <location>
        <begin position="29"/>
        <end position="81"/>
    </location>
</feature>
<feature type="region of interest" description="Disordered" evidence="2">
    <location>
        <begin position="50"/>
        <end position="81"/>
    </location>
</feature>
<feature type="compositionally biased region" description="Acidic residues" evidence="2">
    <location>
        <begin position="53"/>
        <end position="63"/>
    </location>
</feature>
<feature type="modified residue" description="Phosphoserine; by host CK2" evidence="1">
    <location>
        <position position="53"/>
    </location>
</feature>
<feature type="modified residue" description="Phosphoserine; by host CK2" evidence="1">
    <location>
        <position position="57"/>
    </location>
</feature>
<feature type="helix" evidence="7">
    <location>
        <begin position="39"/>
        <end position="48"/>
    </location>
</feature>
<feature type="helix" evidence="7">
    <location>
        <begin position="52"/>
        <end position="55"/>
    </location>
</feature>
<feature type="turn" evidence="7">
    <location>
        <begin position="56"/>
        <end position="59"/>
    </location>
</feature>
<feature type="helix" evidence="8">
    <location>
        <begin position="61"/>
        <end position="63"/>
    </location>
</feature>
<feature type="strand" evidence="8">
    <location>
        <begin position="64"/>
        <end position="67"/>
    </location>
</feature>
<feature type="helix" evidence="7">
    <location>
        <begin position="70"/>
        <end position="72"/>
    </location>
</feature>
<feature type="helix" evidence="7">
    <location>
        <begin position="75"/>
        <end position="78"/>
    </location>
</feature>
<organismHost>
    <name type="scientific">Homo sapiens</name>
    <name type="common">Human</name>
    <dbReference type="NCBI Taxonomy" id="9606"/>
</organismHost>
<reference key="1">
    <citation type="journal article" date="1990" name="J. Virol.">
        <title>Viral determinants of human immunodeficiency virus type 1 T-cell or macrophage tropism, cytopathogenicity, and CD4 antigen modulation.</title>
        <authorList>
            <person name="Cheng-Mayer C."/>
            <person name="Quiroga M."/>
            <person name="Tung J.W."/>
            <person name="Dina D."/>
            <person name="Levy J.A."/>
        </authorList>
    </citation>
    <scope>NUCLEOTIDE SEQUENCE [GENOMIC RNA]</scope>
</reference>
<reference evidence="4" key="2">
    <citation type="journal article" date="1997" name="Eur. J. Biochem.">
        <title>Secondary structure and tertiary fold of the human immunodeficiency virus protein U (Vpu) cytoplasmic domain in solution.</title>
        <authorList>
            <person name="Willbold D."/>
            <person name="Hoffmann S."/>
            <person name="Roesch P."/>
        </authorList>
    </citation>
    <scope>STRUCTURE BY NMR OF 38-81</scope>
</reference>
<reference evidence="5" key="3">
    <citation type="journal article" date="2009" name="FEBS J.">
        <title>NMR structural characterization of HIV-1 virus protein U cytoplasmic domain in the presence of dodecylphosphatidylcholine micelles.</title>
        <authorList>
            <person name="Wittlich M."/>
            <person name="Koenig B.W."/>
            <person name="Stoldt M."/>
            <person name="Schmidt H."/>
            <person name="Willbold D."/>
        </authorList>
    </citation>
    <scope>STRUCTURE BY NMR OF 39-81</scope>
</reference>
<reference evidence="6" key="4">
    <citation type="journal article" date="2014" name="Elife">
        <title>Structural basis of HIV-1 Vpu-mediated BST2 antagonism via hijacking of the clathrin adaptor protein complex 1.</title>
        <authorList>
            <person name="Jia X."/>
            <person name="Weber E."/>
            <person name="Tokarev A."/>
            <person name="Lewinski M."/>
            <person name="Rizk M."/>
            <person name="Suarez M."/>
            <person name="Guatelli J."/>
            <person name="Xiong Y."/>
        </authorList>
    </citation>
    <scope>X-RAY CRYSTALLOGRAPHY (3.00 ANGSTROMS) OF 29-81</scope>
    <scope>FUNCTION</scope>
    <scope>INTERACTION WITH HOST AP1M1</scope>
</reference>
<accession>P19554</accession>
<dbReference type="EMBL" id="M65024">
    <property type="protein sequence ID" value="AAA45071.1"/>
    <property type="molecule type" value="Genomic_RNA"/>
</dbReference>
<dbReference type="PDB" id="1VPU">
    <property type="method" value="NMR"/>
    <property type="chains" value="A=39-81"/>
</dbReference>
<dbReference type="PDB" id="2K7Y">
    <property type="method" value="NMR"/>
    <property type="chains" value="A=39-81"/>
</dbReference>
<dbReference type="PDB" id="4P6Z">
    <property type="method" value="X-ray"/>
    <property type="resolution" value="3.00 A"/>
    <property type="chains" value="V=29-81"/>
</dbReference>
<dbReference type="PDBsum" id="1VPU"/>
<dbReference type="PDBsum" id="2K7Y"/>
<dbReference type="PDBsum" id="4P6Z"/>
<dbReference type="BMRB" id="P19554"/>
<dbReference type="SMR" id="P19554"/>
<dbReference type="IntAct" id="P19554">
    <property type="interactions" value="7"/>
</dbReference>
<dbReference type="MINT" id="P19554"/>
<dbReference type="EvolutionaryTrace" id="P19554"/>
<dbReference type="GO" id="GO:0033644">
    <property type="term" value="C:host cell membrane"/>
    <property type="evidence" value="ECO:0007669"/>
    <property type="project" value="UniProtKB-SubCell"/>
</dbReference>
<dbReference type="GO" id="GO:0005886">
    <property type="term" value="C:plasma membrane"/>
    <property type="evidence" value="ECO:0000269"/>
    <property type="project" value="DisProt"/>
</dbReference>
<dbReference type="GO" id="GO:0042609">
    <property type="term" value="F:CD4 receptor binding"/>
    <property type="evidence" value="ECO:0007669"/>
    <property type="project" value="UniProtKB-UniRule"/>
</dbReference>
<dbReference type="GO" id="GO:0008289">
    <property type="term" value="F:lipid binding"/>
    <property type="evidence" value="ECO:0000269"/>
    <property type="project" value="DisProt"/>
</dbReference>
<dbReference type="GO" id="GO:0005261">
    <property type="term" value="F:monoatomic cation channel activity"/>
    <property type="evidence" value="ECO:0007669"/>
    <property type="project" value="UniProtKB-UniRule"/>
</dbReference>
<dbReference type="GO" id="GO:0032801">
    <property type="term" value="P:receptor catabolic process"/>
    <property type="evidence" value="ECO:0007669"/>
    <property type="project" value="UniProtKB-UniRule"/>
</dbReference>
<dbReference type="GO" id="GO:0052170">
    <property type="term" value="P:symbiont-mediated suppression of host innate immune response"/>
    <property type="evidence" value="ECO:0007669"/>
    <property type="project" value="UniProtKB-KW"/>
</dbReference>
<dbReference type="GO" id="GO:0039502">
    <property type="term" value="P:symbiont-mediated suppression of host type I interferon-mediated signaling pathway"/>
    <property type="evidence" value="ECO:0007669"/>
    <property type="project" value="UniProtKB-UniRule"/>
</dbReference>
<dbReference type="GO" id="GO:0039587">
    <property type="term" value="P:symbiont-mediated-mediated suppression of host tetherin activity"/>
    <property type="evidence" value="ECO:0007669"/>
    <property type="project" value="UniProtKB-UniRule"/>
</dbReference>
<dbReference type="GO" id="GO:0019076">
    <property type="term" value="P:viral release from host cell"/>
    <property type="evidence" value="ECO:0007669"/>
    <property type="project" value="UniProtKB-UniRule"/>
</dbReference>
<dbReference type="Gene3D" id="1.10.195.10">
    <property type="entry name" value="HIV-1 VPU cytoplasmic domain"/>
    <property type="match status" value="1"/>
</dbReference>
<dbReference type="HAMAP" id="MF_04082">
    <property type="entry name" value="HIV_VPU"/>
    <property type="match status" value="1"/>
</dbReference>
<dbReference type="InterPro" id="IPR008187">
    <property type="entry name" value="Vpu"/>
</dbReference>
<dbReference type="InterPro" id="IPR009032">
    <property type="entry name" value="Vpu_cyt_dom_sf"/>
</dbReference>
<dbReference type="Pfam" id="PF00558">
    <property type="entry name" value="Vpu"/>
    <property type="match status" value="1"/>
</dbReference>
<dbReference type="SUPFAM" id="SSF57647">
    <property type="entry name" value="HIV-1 VPU cytoplasmic domain"/>
    <property type="match status" value="1"/>
</dbReference>
<keyword id="KW-0002">3D-structure</keyword>
<keyword id="KW-0014">AIDS</keyword>
<keyword id="KW-0053">Apoptosis</keyword>
<keyword id="KW-1043">Host membrane</keyword>
<keyword id="KW-0945">Host-virus interaction</keyword>
<keyword id="KW-1090">Inhibition of host innate immune response by virus</keyword>
<keyword id="KW-1084">Inhibition of host tetherin by virus</keyword>
<keyword id="KW-0407">Ion channel</keyword>
<keyword id="KW-0406">Ion transport</keyword>
<keyword id="KW-0472">Membrane</keyword>
<keyword id="KW-0597">Phosphoprotein</keyword>
<keyword id="KW-0812">Transmembrane</keyword>
<keyword id="KW-1133">Transmembrane helix</keyword>
<keyword id="KW-0813">Transport</keyword>
<keyword id="KW-0899">Viral immunoevasion</keyword>